<reference key="1">
    <citation type="submission" date="2009-06" db="EMBL/GenBank/DDBJ databases">
        <title>Complete sequence of Desulfovibrio salexigens DSM 2638.</title>
        <authorList>
            <consortium name="US DOE Joint Genome Institute"/>
            <person name="Lucas S."/>
            <person name="Copeland A."/>
            <person name="Lapidus A."/>
            <person name="Glavina del Rio T."/>
            <person name="Tice H."/>
            <person name="Bruce D."/>
            <person name="Goodwin L."/>
            <person name="Pitluck S."/>
            <person name="Munk A.C."/>
            <person name="Brettin T."/>
            <person name="Detter J.C."/>
            <person name="Han C."/>
            <person name="Tapia R."/>
            <person name="Larimer F."/>
            <person name="Land M."/>
            <person name="Hauser L."/>
            <person name="Kyrpides N."/>
            <person name="Anderson I."/>
            <person name="Wall J.D."/>
            <person name="Arkin A.P."/>
            <person name="Dehal P."/>
            <person name="Chivian D."/>
            <person name="Giles B."/>
            <person name="Hazen T.C."/>
        </authorList>
    </citation>
    <scope>NUCLEOTIDE SEQUENCE [LARGE SCALE GENOMIC DNA]</scope>
    <source>
        <strain>ATCC 14822 / DSM 2638 / NCIMB 8403 / VKM B-1763</strain>
    </source>
</reference>
<proteinExistence type="inferred from homology"/>
<sequence>MLAILDYKAGNQTSVQRALNKLGIPNQITSDKEVLSKATGIIFPGVGAAGQAMDELTSGGLDELLKDLVQQKKPLLGICVGCQILLDYSEENDTQALSVIPGECRLFNPSWEDYEGVPIRVPHMGWNQIELKQDCILFKDIDPEAHFYFVHSYYPAPEEKYIIGETIYGRPFCSLHGREGLWAVQFHPEKSGRPGLKLLSNFYEYCKEVSDA</sequence>
<accession>C6C1X6</accession>
<feature type="chain" id="PRO_1000204802" description="Imidazole glycerol phosphate synthase subunit HisH">
    <location>
        <begin position="1"/>
        <end position="212"/>
    </location>
</feature>
<feature type="domain" description="Glutamine amidotransferase type-1" evidence="1">
    <location>
        <begin position="1"/>
        <end position="212"/>
    </location>
</feature>
<feature type="active site" description="Nucleophile" evidence="1">
    <location>
        <position position="79"/>
    </location>
</feature>
<feature type="active site" evidence="1">
    <location>
        <position position="187"/>
    </location>
</feature>
<feature type="active site" evidence="1">
    <location>
        <position position="189"/>
    </location>
</feature>
<keyword id="KW-0028">Amino-acid biosynthesis</keyword>
<keyword id="KW-0963">Cytoplasm</keyword>
<keyword id="KW-0315">Glutamine amidotransferase</keyword>
<keyword id="KW-0368">Histidine biosynthesis</keyword>
<keyword id="KW-0378">Hydrolase</keyword>
<keyword id="KW-0456">Lyase</keyword>
<keyword id="KW-1185">Reference proteome</keyword>
<organism>
    <name type="scientific">Maridesulfovibrio salexigens (strain ATCC 14822 / DSM 2638 / NCIMB 8403 / VKM B-1763)</name>
    <name type="common">Desulfovibrio salexigens</name>
    <dbReference type="NCBI Taxonomy" id="526222"/>
    <lineage>
        <taxon>Bacteria</taxon>
        <taxon>Pseudomonadati</taxon>
        <taxon>Thermodesulfobacteriota</taxon>
        <taxon>Desulfovibrionia</taxon>
        <taxon>Desulfovibrionales</taxon>
        <taxon>Desulfovibrionaceae</taxon>
        <taxon>Maridesulfovibrio</taxon>
    </lineage>
</organism>
<comment type="function">
    <text evidence="1">IGPS catalyzes the conversion of PRFAR and glutamine to IGP, AICAR and glutamate. The HisH subunit catalyzes the hydrolysis of glutamine to glutamate and ammonia as part of the synthesis of IGP and AICAR. The resulting ammonia molecule is channeled to the active site of HisF.</text>
</comment>
<comment type="catalytic activity">
    <reaction evidence="1">
        <text>5-[(5-phospho-1-deoxy-D-ribulos-1-ylimino)methylamino]-1-(5-phospho-beta-D-ribosyl)imidazole-4-carboxamide + L-glutamine = D-erythro-1-(imidazol-4-yl)glycerol 3-phosphate + 5-amino-1-(5-phospho-beta-D-ribosyl)imidazole-4-carboxamide + L-glutamate + H(+)</text>
        <dbReference type="Rhea" id="RHEA:24793"/>
        <dbReference type="ChEBI" id="CHEBI:15378"/>
        <dbReference type="ChEBI" id="CHEBI:29985"/>
        <dbReference type="ChEBI" id="CHEBI:58278"/>
        <dbReference type="ChEBI" id="CHEBI:58359"/>
        <dbReference type="ChEBI" id="CHEBI:58475"/>
        <dbReference type="ChEBI" id="CHEBI:58525"/>
        <dbReference type="EC" id="4.3.2.10"/>
    </reaction>
</comment>
<comment type="catalytic activity">
    <reaction evidence="1">
        <text>L-glutamine + H2O = L-glutamate + NH4(+)</text>
        <dbReference type="Rhea" id="RHEA:15889"/>
        <dbReference type="ChEBI" id="CHEBI:15377"/>
        <dbReference type="ChEBI" id="CHEBI:28938"/>
        <dbReference type="ChEBI" id="CHEBI:29985"/>
        <dbReference type="ChEBI" id="CHEBI:58359"/>
        <dbReference type="EC" id="3.5.1.2"/>
    </reaction>
</comment>
<comment type="pathway">
    <text evidence="1">Amino-acid biosynthesis; L-histidine biosynthesis; L-histidine from 5-phospho-alpha-D-ribose 1-diphosphate: step 5/9.</text>
</comment>
<comment type="subunit">
    <text evidence="1">Heterodimer of HisH and HisF.</text>
</comment>
<comment type="subcellular location">
    <subcellularLocation>
        <location evidence="1">Cytoplasm</location>
    </subcellularLocation>
</comment>
<dbReference type="EC" id="4.3.2.10" evidence="1"/>
<dbReference type="EC" id="3.5.1.2" evidence="1"/>
<dbReference type="EMBL" id="CP001649">
    <property type="protein sequence ID" value="ACS79372.1"/>
    <property type="molecule type" value="Genomic_DNA"/>
</dbReference>
<dbReference type="RefSeq" id="WP_015851190.1">
    <property type="nucleotide sequence ID" value="NC_012881.1"/>
</dbReference>
<dbReference type="SMR" id="C6C1X6"/>
<dbReference type="STRING" id="526222.Desal_1310"/>
<dbReference type="KEGG" id="dsa:Desal_1310"/>
<dbReference type="eggNOG" id="COG0118">
    <property type="taxonomic scope" value="Bacteria"/>
</dbReference>
<dbReference type="HOGENOM" id="CLU_071837_2_2_7"/>
<dbReference type="OrthoDB" id="9807749at2"/>
<dbReference type="UniPathway" id="UPA00031">
    <property type="reaction ID" value="UER00010"/>
</dbReference>
<dbReference type="Proteomes" id="UP000002601">
    <property type="component" value="Chromosome"/>
</dbReference>
<dbReference type="GO" id="GO:0005737">
    <property type="term" value="C:cytoplasm"/>
    <property type="evidence" value="ECO:0007669"/>
    <property type="project" value="UniProtKB-SubCell"/>
</dbReference>
<dbReference type="GO" id="GO:0004359">
    <property type="term" value="F:glutaminase activity"/>
    <property type="evidence" value="ECO:0007669"/>
    <property type="project" value="UniProtKB-EC"/>
</dbReference>
<dbReference type="GO" id="GO:0000107">
    <property type="term" value="F:imidazoleglycerol-phosphate synthase activity"/>
    <property type="evidence" value="ECO:0007669"/>
    <property type="project" value="UniProtKB-UniRule"/>
</dbReference>
<dbReference type="GO" id="GO:0016829">
    <property type="term" value="F:lyase activity"/>
    <property type="evidence" value="ECO:0007669"/>
    <property type="project" value="UniProtKB-KW"/>
</dbReference>
<dbReference type="GO" id="GO:0000105">
    <property type="term" value="P:L-histidine biosynthetic process"/>
    <property type="evidence" value="ECO:0007669"/>
    <property type="project" value="UniProtKB-UniRule"/>
</dbReference>
<dbReference type="CDD" id="cd01748">
    <property type="entry name" value="GATase1_IGP_Synthase"/>
    <property type="match status" value="1"/>
</dbReference>
<dbReference type="Gene3D" id="3.40.50.880">
    <property type="match status" value="1"/>
</dbReference>
<dbReference type="HAMAP" id="MF_00278">
    <property type="entry name" value="HisH"/>
    <property type="match status" value="1"/>
</dbReference>
<dbReference type="InterPro" id="IPR029062">
    <property type="entry name" value="Class_I_gatase-like"/>
</dbReference>
<dbReference type="InterPro" id="IPR017926">
    <property type="entry name" value="GATASE"/>
</dbReference>
<dbReference type="InterPro" id="IPR010139">
    <property type="entry name" value="Imidazole-glycPsynth_HisH"/>
</dbReference>
<dbReference type="NCBIfam" id="TIGR01855">
    <property type="entry name" value="IMP_synth_hisH"/>
    <property type="match status" value="1"/>
</dbReference>
<dbReference type="PANTHER" id="PTHR42701">
    <property type="entry name" value="IMIDAZOLE GLYCEROL PHOSPHATE SYNTHASE SUBUNIT HISH"/>
    <property type="match status" value="1"/>
</dbReference>
<dbReference type="PANTHER" id="PTHR42701:SF1">
    <property type="entry name" value="IMIDAZOLE GLYCEROL PHOSPHATE SYNTHASE SUBUNIT HISH"/>
    <property type="match status" value="1"/>
</dbReference>
<dbReference type="Pfam" id="PF00117">
    <property type="entry name" value="GATase"/>
    <property type="match status" value="1"/>
</dbReference>
<dbReference type="PIRSF" id="PIRSF000495">
    <property type="entry name" value="Amidotransf_hisH"/>
    <property type="match status" value="1"/>
</dbReference>
<dbReference type="SUPFAM" id="SSF52317">
    <property type="entry name" value="Class I glutamine amidotransferase-like"/>
    <property type="match status" value="1"/>
</dbReference>
<dbReference type="PROSITE" id="PS51273">
    <property type="entry name" value="GATASE_TYPE_1"/>
    <property type="match status" value="1"/>
</dbReference>
<evidence type="ECO:0000255" key="1">
    <source>
        <dbReference type="HAMAP-Rule" id="MF_00278"/>
    </source>
</evidence>
<gene>
    <name evidence="1" type="primary">hisH</name>
    <name type="ordered locus">Desal_1310</name>
</gene>
<name>HIS5_MARSD</name>
<protein>
    <recommendedName>
        <fullName evidence="1">Imidazole glycerol phosphate synthase subunit HisH</fullName>
        <ecNumber evidence="1">4.3.2.10</ecNumber>
    </recommendedName>
    <alternativeName>
        <fullName evidence="1">IGP synthase glutaminase subunit</fullName>
        <ecNumber evidence="1">3.5.1.2</ecNumber>
    </alternativeName>
    <alternativeName>
        <fullName evidence="1">IGP synthase subunit HisH</fullName>
    </alternativeName>
    <alternativeName>
        <fullName evidence="1">ImGP synthase subunit HisH</fullName>
        <shortName evidence="1">IGPS subunit HisH</shortName>
    </alternativeName>
</protein>